<dbReference type="EMBL" id="GU292872">
    <property type="protein sequence ID" value="ADB56688.1"/>
    <property type="molecule type" value="mRNA"/>
</dbReference>
<dbReference type="SMR" id="D2Y1Z5"/>
<dbReference type="ArachnoServer" id="AS001740">
    <property type="toxin name" value="mu-theraphotoxin-Hhn2j"/>
</dbReference>
<dbReference type="GO" id="GO:0005576">
    <property type="term" value="C:extracellular region"/>
    <property type="evidence" value="ECO:0007669"/>
    <property type="project" value="UniProtKB-SubCell"/>
</dbReference>
<dbReference type="GO" id="GO:0044231">
    <property type="term" value="C:host cell presynaptic membrane"/>
    <property type="evidence" value="ECO:0007669"/>
    <property type="project" value="UniProtKB-KW"/>
</dbReference>
<dbReference type="GO" id="GO:0008200">
    <property type="term" value="F:ion channel inhibitor activity"/>
    <property type="evidence" value="ECO:0007669"/>
    <property type="project" value="InterPro"/>
</dbReference>
<dbReference type="GO" id="GO:0017080">
    <property type="term" value="F:sodium channel regulator activity"/>
    <property type="evidence" value="ECO:0007669"/>
    <property type="project" value="UniProtKB-KW"/>
</dbReference>
<dbReference type="GO" id="GO:0090729">
    <property type="term" value="F:toxin activity"/>
    <property type="evidence" value="ECO:0007669"/>
    <property type="project" value="UniProtKB-KW"/>
</dbReference>
<dbReference type="InterPro" id="IPR011696">
    <property type="entry name" value="Huwentoxin-1"/>
</dbReference>
<dbReference type="InterPro" id="IPR013140">
    <property type="entry name" value="Huwentoxin_CS1"/>
</dbReference>
<dbReference type="Pfam" id="PF07740">
    <property type="entry name" value="Toxin_12"/>
    <property type="match status" value="1"/>
</dbReference>
<dbReference type="SUPFAM" id="SSF57059">
    <property type="entry name" value="omega toxin-like"/>
    <property type="match status" value="1"/>
</dbReference>
<dbReference type="PROSITE" id="PS60021">
    <property type="entry name" value="HWTX_1"/>
    <property type="match status" value="1"/>
</dbReference>
<accession>D2Y1Z5</accession>
<sequence length="83" mass="9111">MKASMFLALAGSVLLFVVGYASESEEKEFPIELLSKIFAVDVFKGEERGCKGFGDSCTPGKNECCPNHACSNKHKWCKVYLGK</sequence>
<name>H3B04_CYRHA</name>
<protein>
    <recommendedName>
        <fullName>Mu-theraphotoxin-Hhn2j 4</fullName>
        <shortName>Mu-TRTX-Hhn2j</shortName>
    </recommendedName>
    <alternativeName>
        <fullName>Hainantoxin-III-2.4</fullName>
        <shortName>HNTX-III-2.4</shortName>
    </alternativeName>
</protein>
<comment type="function">
    <text evidence="1">Lethal neurotoxin. Selectively blocks tetrodotoxin-sensitive voltage-gated sodium channels (Nav). Does not affect tetrodotoxin-resistant voltage-gated sodium channels or calcium channels (By similarity).</text>
</comment>
<comment type="subunit">
    <text evidence="1">Monomer.</text>
</comment>
<comment type="subcellular location">
    <subcellularLocation>
        <location evidence="1">Secreted</location>
    </subcellularLocation>
</comment>
<comment type="tissue specificity">
    <text>Expressed by the venom gland.</text>
</comment>
<comment type="domain">
    <text evidence="1">The presence of a 'disulfide through disulfide knot' structurally defines this protein as a knottin.</text>
</comment>
<comment type="similarity">
    <text evidence="3">Belongs to the neurotoxin 10 (Hwtx-1) family. 15 (Hntx-3) subfamily.</text>
</comment>
<proteinExistence type="evidence at transcript level"/>
<evidence type="ECO:0000250" key="1"/>
<evidence type="ECO:0000255" key="2"/>
<evidence type="ECO:0000305" key="3"/>
<reference key="1">
    <citation type="journal article" date="2010" name="J. Proteome Res.">
        <title>Molecular diversification of peptide toxins from the tarantula Haplopelma hainanum (Ornithoctonus hainana) venom based on transcriptomic, peptidomic, and genomic analyses.</title>
        <authorList>
            <person name="Tang X."/>
            <person name="Zhang Y."/>
            <person name="Hu W."/>
            <person name="Xu D."/>
            <person name="Tao H."/>
            <person name="Yang X."/>
            <person name="Li Y."/>
            <person name="Jiang L."/>
            <person name="Liang S."/>
        </authorList>
    </citation>
    <scope>NUCLEOTIDE SEQUENCE [LARGE SCALE MRNA]</scope>
    <source>
        <tissue>Venom gland</tissue>
    </source>
</reference>
<keyword id="KW-0027">Amidation</keyword>
<keyword id="KW-1015">Disulfide bond</keyword>
<keyword id="KW-0872">Ion channel impairing toxin</keyword>
<keyword id="KW-0960">Knottin</keyword>
<keyword id="KW-0528">Neurotoxin</keyword>
<keyword id="KW-0638">Presynaptic neurotoxin</keyword>
<keyword id="KW-0964">Secreted</keyword>
<keyword id="KW-0732">Signal</keyword>
<keyword id="KW-0800">Toxin</keyword>
<keyword id="KW-0738">Voltage-gated sodium channel impairing toxin</keyword>
<feature type="signal peptide" evidence="2">
    <location>
        <begin position="1"/>
        <end position="21"/>
    </location>
</feature>
<feature type="propeptide" id="PRO_0000400534" evidence="1">
    <location>
        <begin position="22"/>
        <end position="48"/>
    </location>
</feature>
<feature type="peptide" id="PRO_0000400535" description="Mu-theraphotoxin-Hhn2j 4">
    <location>
        <begin position="49"/>
        <end position="81"/>
    </location>
</feature>
<feature type="modified residue" description="Leucine amide" evidence="1">
    <location>
        <position position="81"/>
    </location>
</feature>
<feature type="disulfide bond" evidence="1">
    <location>
        <begin position="50"/>
        <end position="65"/>
    </location>
</feature>
<feature type="disulfide bond" evidence="1">
    <location>
        <begin position="57"/>
        <end position="70"/>
    </location>
</feature>
<feature type="disulfide bond" evidence="1">
    <location>
        <begin position="64"/>
        <end position="77"/>
    </location>
</feature>
<organism>
    <name type="scientific">Cyriopagopus hainanus</name>
    <name type="common">Chinese bird spider</name>
    <name type="synonym">Haplopelma hainanum</name>
    <dbReference type="NCBI Taxonomy" id="209901"/>
    <lineage>
        <taxon>Eukaryota</taxon>
        <taxon>Metazoa</taxon>
        <taxon>Ecdysozoa</taxon>
        <taxon>Arthropoda</taxon>
        <taxon>Chelicerata</taxon>
        <taxon>Arachnida</taxon>
        <taxon>Araneae</taxon>
        <taxon>Mygalomorphae</taxon>
        <taxon>Theraphosidae</taxon>
        <taxon>Haplopelma</taxon>
    </lineage>
</organism>